<reference key="1">
    <citation type="journal article" date="1996" name="DNA Res.">
        <title>Sequence analysis of the genome of the unicellular cyanobacterium Synechocystis sp. strain PCC6803. II. Sequence determination of the entire genome and assignment of potential protein-coding regions.</title>
        <authorList>
            <person name="Kaneko T."/>
            <person name="Sato S."/>
            <person name="Kotani H."/>
            <person name="Tanaka A."/>
            <person name="Asamizu E."/>
            <person name="Nakamura Y."/>
            <person name="Miyajima N."/>
            <person name="Hirosawa M."/>
            <person name="Sugiura M."/>
            <person name="Sasamoto S."/>
            <person name="Kimura T."/>
            <person name="Hosouchi T."/>
            <person name="Matsuno A."/>
            <person name="Muraki A."/>
            <person name="Nakazaki N."/>
            <person name="Naruo K."/>
            <person name="Okumura S."/>
            <person name="Shimpo S."/>
            <person name="Takeuchi C."/>
            <person name="Wada T."/>
            <person name="Watanabe A."/>
            <person name="Yamada M."/>
            <person name="Yasuda M."/>
            <person name="Tabata S."/>
        </authorList>
    </citation>
    <scope>NUCLEOTIDE SEQUENCE [LARGE SCALE GENOMIC DNA]</scope>
    <source>
        <strain>ATCC 27184 / PCC 6803 / Kazusa</strain>
    </source>
</reference>
<keyword id="KW-0997">Cell inner membrane</keyword>
<keyword id="KW-1003">Cell membrane</keyword>
<keyword id="KW-0472">Membrane</keyword>
<keyword id="KW-0653">Protein transport</keyword>
<keyword id="KW-1185">Reference proteome</keyword>
<keyword id="KW-0793">Thylakoid</keyword>
<keyword id="KW-0811">Translocation</keyword>
<keyword id="KW-0812">Transmembrane</keyword>
<keyword id="KW-1133">Transmembrane helix</keyword>
<keyword id="KW-0813">Transport</keyword>
<evidence type="ECO:0000255" key="1">
    <source>
        <dbReference type="HAMAP-Rule" id="MF_01465"/>
    </source>
</evidence>
<sequence length="442" mass="48000">MVVSRDKAPSAQETFLQMAQAAGLRGRLLITIGLLILVRVGIFIPVPDIDRQAFSQAINDNSVIGFLNIFTGGGLSTVGIFALGILPYINASIIMQLLTAAIPALEDLQKNEGEAGRRKISQYSRYIAFGWCIIQGLGLTVGLLRPYANNYGPLFIFQTVLAITAGSMFVMWISELITERGIGNGASLLIFVNIVATLPQTLGQTIEYAQSGGRQSITAVVLLMLVFLVMIVGIVFVQEGTRRIPIISARRQVGKKLYRERTSYLPLRLNQGGVMPIIFASAVLILPSSLAGFATGNEGLGGFGEIFVQISNALRPGTWVYTVVYSVMIFFFSYFYASLIVNPEDVSKNLKKMGSSIPGIRPGKKTEQYLEGVLNRLTFLGAIFLSFVATLPIFVEQATGVTTFQGLGATSLLILVGVAIDTAKQIQTYVISQRYEGMIKQP</sequence>
<proteinExistence type="inferred from homology"/>
<protein>
    <recommendedName>
        <fullName evidence="1">Protein translocase subunit SecY</fullName>
    </recommendedName>
</protein>
<dbReference type="EMBL" id="BA000022">
    <property type="protein sequence ID" value="BAA17331.1"/>
    <property type="molecule type" value="Genomic_DNA"/>
</dbReference>
<dbReference type="PIR" id="S77484">
    <property type="entry name" value="S77484"/>
</dbReference>
<dbReference type="SMR" id="P77964"/>
<dbReference type="FunCoup" id="P77964">
    <property type="interactions" value="494"/>
</dbReference>
<dbReference type="IntAct" id="P77964">
    <property type="interactions" value="7"/>
</dbReference>
<dbReference type="STRING" id="1148.gene:10498194"/>
<dbReference type="PaxDb" id="1148-1652409"/>
<dbReference type="EnsemblBacteria" id="BAA17331">
    <property type="protein sequence ID" value="BAA17331"/>
    <property type="gene ID" value="BAA17331"/>
</dbReference>
<dbReference type="KEGG" id="syn:sll1814"/>
<dbReference type="eggNOG" id="COG0201">
    <property type="taxonomic scope" value="Bacteria"/>
</dbReference>
<dbReference type="InParanoid" id="P77964"/>
<dbReference type="PhylomeDB" id="P77964"/>
<dbReference type="Proteomes" id="UP000001425">
    <property type="component" value="Chromosome"/>
</dbReference>
<dbReference type="GO" id="GO:0031522">
    <property type="term" value="C:cell envelope Sec protein transport complex"/>
    <property type="evidence" value="ECO:0000318"/>
    <property type="project" value="GO_Central"/>
</dbReference>
<dbReference type="GO" id="GO:0005886">
    <property type="term" value="C:plasma membrane"/>
    <property type="evidence" value="ECO:0000318"/>
    <property type="project" value="GO_Central"/>
</dbReference>
<dbReference type="GO" id="GO:0031676">
    <property type="term" value="C:plasma membrane-derived thylakoid membrane"/>
    <property type="evidence" value="ECO:0007669"/>
    <property type="project" value="UniProtKB-SubCell"/>
</dbReference>
<dbReference type="GO" id="GO:0008320">
    <property type="term" value="F:protein transmembrane transporter activity"/>
    <property type="evidence" value="ECO:0000318"/>
    <property type="project" value="GO_Central"/>
</dbReference>
<dbReference type="GO" id="GO:0005048">
    <property type="term" value="F:signal sequence binding"/>
    <property type="evidence" value="ECO:0000318"/>
    <property type="project" value="GO_Central"/>
</dbReference>
<dbReference type="GO" id="GO:0043952">
    <property type="term" value="P:protein transport by the Sec complex"/>
    <property type="evidence" value="ECO:0007669"/>
    <property type="project" value="UniProtKB-UniRule"/>
</dbReference>
<dbReference type="GO" id="GO:0006616">
    <property type="term" value="P:SRP-dependent cotranslational protein targeting to membrane, translocation"/>
    <property type="evidence" value="ECO:0000318"/>
    <property type="project" value="GO_Central"/>
</dbReference>
<dbReference type="FunFam" id="1.10.3370.10:FF:000001">
    <property type="entry name" value="Preprotein translocase subunit SecY"/>
    <property type="match status" value="1"/>
</dbReference>
<dbReference type="Gene3D" id="1.10.3370.10">
    <property type="entry name" value="SecY subunit domain"/>
    <property type="match status" value="1"/>
</dbReference>
<dbReference type="HAMAP" id="MF_01465">
    <property type="entry name" value="SecY"/>
    <property type="match status" value="1"/>
</dbReference>
<dbReference type="InterPro" id="IPR026593">
    <property type="entry name" value="SecY"/>
</dbReference>
<dbReference type="InterPro" id="IPR002208">
    <property type="entry name" value="SecY/SEC61-alpha"/>
</dbReference>
<dbReference type="InterPro" id="IPR030659">
    <property type="entry name" value="SecY_CS"/>
</dbReference>
<dbReference type="InterPro" id="IPR023201">
    <property type="entry name" value="SecY_dom_sf"/>
</dbReference>
<dbReference type="NCBIfam" id="TIGR00967">
    <property type="entry name" value="3a0501s007"/>
    <property type="match status" value="1"/>
</dbReference>
<dbReference type="PANTHER" id="PTHR10906">
    <property type="entry name" value="SECY/SEC61-ALPHA FAMILY MEMBER"/>
    <property type="match status" value="1"/>
</dbReference>
<dbReference type="Pfam" id="PF00344">
    <property type="entry name" value="SecY"/>
    <property type="match status" value="1"/>
</dbReference>
<dbReference type="PIRSF" id="PIRSF004557">
    <property type="entry name" value="SecY"/>
    <property type="match status" value="1"/>
</dbReference>
<dbReference type="PRINTS" id="PR00303">
    <property type="entry name" value="SECYTRNLCASE"/>
</dbReference>
<dbReference type="SUPFAM" id="SSF103491">
    <property type="entry name" value="Preprotein translocase SecY subunit"/>
    <property type="match status" value="1"/>
</dbReference>
<dbReference type="PROSITE" id="PS00755">
    <property type="entry name" value="SECY_1"/>
    <property type="match status" value="1"/>
</dbReference>
<dbReference type="PROSITE" id="PS00756">
    <property type="entry name" value="SECY_2"/>
    <property type="match status" value="1"/>
</dbReference>
<name>SECY_SYNY3</name>
<comment type="function">
    <text evidence="1">The central subunit of the protein translocation channel SecYEG. Consists of two halves formed by TMs 1-5 and 6-10. These two domains form a lateral gate at the front which open onto the bilayer between TMs 2 and 7, and are clamped together by SecE at the back. The channel is closed by both a pore ring composed of hydrophobic SecY resides and a short helix (helix 2A) on the extracellular side of the membrane which forms a plug. The plug probably moves laterally to allow the channel to open. The ring and the pore may move independently.</text>
</comment>
<comment type="subunit">
    <text evidence="1">Component of the Sec protein translocase complex. Heterotrimer consisting of SecY, SecE and SecG subunits. The heterotrimers can form oligomers, although 1 heterotrimer is thought to be able to translocate proteins. Interacts with the ribosome. Interacts with SecDF, and other proteins may be involved. Interacts with SecA.</text>
</comment>
<comment type="subcellular location">
    <subcellularLocation>
        <location evidence="1">Cell inner membrane</location>
        <topology evidence="1">Multi-pass membrane protein</topology>
    </subcellularLocation>
    <subcellularLocation>
        <location evidence="1">Cellular thylakoid membrane</location>
        <topology evidence="1">Multi-pass membrane protein</topology>
    </subcellularLocation>
</comment>
<comment type="similarity">
    <text evidence="1">Belongs to the SecY/SEC61-alpha family.</text>
</comment>
<feature type="chain" id="PRO_0000131757" description="Protein translocase subunit SecY">
    <location>
        <begin position="1"/>
        <end position="442"/>
    </location>
</feature>
<feature type="transmembrane region" description="Helical" evidence="1">
    <location>
        <begin position="29"/>
        <end position="49"/>
    </location>
</feature>
<feature type="transmembrane region" description="Helical" evidence="1">
    <location>
        <begin position="69"/>
        <end position="89"/>
    </location>
</feature>
<feature type="transmembrane region" description="Helical" evidence="1">
    <location>
        <begin position="126"/>
        <end position="146"/>
    </location>
</feature>
<feature type="transmembrane region" description="Helical" evidence="1">
    <location>
        <begin position="153"/>
        <end position="173"/>
    </location>
</feature>
<feature type="transmembrane region" description="Helical" evidence="1">
    <location>
        <begin position="182"/>
        <end position="202"/>
    </location>
</feature>
<feature type="transmembrane region" description="Helical" evidence="1">
    <location>
        <begin position="217"/>
        <end position="237"/>
    </location>
</feature>
<feature type="transmembrane region" description="Helical" evidence="1">
    <location>
        <begin position="274"/>
        <end position="294"/>
    </location>
</feature>
<feature type="transmembrane region" description="Helical" evidence="1">
    <location>
        <begin position="320"/>
        <end position="340"/>
    </location>
</feature>
<feature type="transmembrane region" description="Helical" evidence="1">
    <location>
        <begin position="377"/>
        <end position="397"/>
    </location>
</feature>
<feature type="transmembrane region" description="Helical" evidence="1">
    <location>
        <begin position="400"/>
        <end position="420"/>
    </location>
</feature>
<gene>
    <name evidence="1" type="primary">secY</name>
    <name type="ordered locus">sll1814</name>
</gene>
<organism>
    <name type="scientific">Synechocystis sp. (strain ATCC 27184 / PCC 6803 / Kazusa)</name>
    <dbReference type="NCBI Taxonomy" id="1111708"/>
    <lineage>
        <taxon>Bacteria</taxon>
        <taxon>Bacillati</taxon>
        <taxon>Cyanobacteriota</taxon>
        <taxon>Cyanophyceae</taxon>
        <taxon>Synechococcales</taxon>
        <taxon>Merismopediaceae</taxon>
        <taxon>Synechocystis</taxon>
    </lineage>
</organism>
<accession>P77964</accession>